<feature type="chain" id="PRO_1000088272" description="Demethylmenaquinone methyltransferase">
    <location>
        <begin position="1"/>
        <end position="237"/>
    </location>
</feature>
<feature type="binding site" evidence="1">
    <location>
        <position position="58"/>
    </location>
    <ligand>
        <name>S-adenosyl-L-methionine</name>
        <dbReference type="ChEBI" id="CHEBI:59789"/>
    </ligand>
</feature>
<feature type="binding site" evidence="1">
    <location>
        <position position="79"/>
    </location>
    <ligand>
        <name>S-adenosyl-L-methionine</name>
        <dbReference type="ChEBI" id="CHEBI:59789"/>
    </ligand>
</feature>
<feature type="binding site" evidence="1">
    <location>
        <begin position="106"/>
        <end position="107"/>
    </location>
    <ligand>
        <name>S-adenosyl-L-methionine</name>
        <dbReference type="ChEBI" id="CHEBI:59789"/>
    </ligand>
</feature>
<comment type="function">
    <text evidence="1">Methyltransferase required for the conversion of demethylmenaquinol (DMKH2) to menaquinol (MKH2).</text>
</comment>
<comment type="catalytic activity">
    <reaction evidence="1">
        <text>a 2-demethylmenaquinol + S-adenosyl-L-methionine = a menaquinol + S-adenosyl-L-homocysteine + H(+)</text>
        <dbReference type="Rhea" id="RHEA:42640"/>
        <dbReference type="Rhea" id="RHEA-COMP:9539"/>
        <dbReference type="Rhea" id="RHEA-COMP:9563"/>
        <dbReference type="ChEBI" id="CHEBI:15378"/>
        <dbReference type="ChEBI" id="CHEBI:18151"/>
        <dbReference type="ChEBI" id="CHEBI:55437"/>
        <dbReference type="ChEBI" id="CHEBI:57856"/>
        <dbReference type="ChEBI" id="CHEBI:59789"/>
        <dbReference type="EC" id="2.1.1.163"/>
    </reaction>
</comment>
<comment type="pathway">
    <text evidence="1">Quinol/quinone metabolism; menaquinone biosynthesis; menaquinol from 1,4-dihydroxy-2-naphthoate: step 2/2.</text>
</comment>
<comment type="similarity">
    <text evidence="1">Belongs to the class I-like SAM-binding methyltransferase superfamily. MenG/UbiE family.</text>
</comment>
<reference key="1">
    <citation type="journal article" date="2008" name="Chem. Biol. Interact.">
        <title>Extending the Bacillus cereus group genomics to putative food-borne pathogens of different toxicity.</title>
        <authorList>
            <person name="Lapidus A."/>
            <person name="Goltsman E."/>
            <person name="Auger S."/>
            <person name="Galleron N."/>
            <person name="Segurens B."/>
            <person name="Dossat C."/>
            <person name="Land M.L."/>
            <person name="Broussolle V."/>
            <person name="Brillard J."/>
            <person name="Guinebretiere M.-H."/>
            <person name="Sanchis V."/>
            <person name="Nguen-the C."/>
            <person name="Lereclus D."/>
            <person name="Richardson P."/>
            <person name="Wincker P."/>
            <person name="Weissenbach J."/>
            <person name="Ehrlich S.D."/>
            <person name="Sorokin A."/>
        </authorList>
    </citation>
    <scope>NUCLEOTIDE SEQUENCE [LARGE SCALE GENOMIC DNA]</scope>
    <source>
        <strain>DSM 22905 / CIP 110041 / 391-98 / NVH 391-98</strain>
    </source>
</reference>
<proteinExistence type="inferred from homology"/>
<sequence>MQQSKEERVHDVFEKISDKYDVMNSVISFQRHKAWRKETMRIMDVKPGSKALDVCCGTADWTIALANAVGPNGEVKGLDFSENMLAVGKEKVKALGLEQVELMHGNAMELPFEDHTFDYVTIGFGLRNVPDYMHVLKEMTRVVKPGGKVICLETSQPTMIGFRQIYILYFKYIMPLFGKIFAKSYKEYSWLQESASTFPGMKELARMFEDAGLERIQVKPFTFGVAAMHLGVKPESE</sequence>
<dbReference type="EC" id="2.1.1.163" evidence="1"/>
<dbReference type="EMBL" id="CP000764">
    <property type="protein sequence ID" value="ABS21558.1"/>
    <property type="molecule type" value="Genomic_DNA"/>
</dbReference>
<dbReference type="RefSeq" id="WP_011984309.1">
    <property type="nucleotide sequence ID" value="NC_009674.1"/>
</dbReference>
<dbReference type="SMR" id="A7GN50"/>
<dbReference type="STRING" id="315749.Bcer98_1236"/>
<dbReference type="GeneID" id="33896585"/>
<dbReference type="KEGG" id="bcy:Bcer98_1236"/>
<dbReference type="eggNOG" id="COG2226">
    <property type="taxonomic scope" value="Bacteria"/>
</dbReference>
<dbReference type="HOGENOM" id="CLU_037990_0_0_9"/>
<dbReference type="OrthoDB" id="9808140at2"/>
<dbReference type="UniPathway" id="UPA00079">
    <property type="reaction ID" value="UER00169"/>
</dbReference>
<dbReference type="Proteomes" id="UP000002300">
    <property type="component" value="Chromosome"/>
</dbReference>
<dbReference type="GO" id="GO:0043770">
    <property type="term" value="F:demethylmenaquinone methyltransferase activity"/>
    <property type="evidence" value="ECO:0007669"/>
    <property type="project" value="UniProtKB-UniRule"/>
</dbReference>
<dbReference type="GO" id="GO:0009234">
    <property type="term" value="P:menaquinone biosynthetic process"/>
    <property type="evidence" value="ECO:0007669"/>
    <property type="project" value="UniProtKB-UniRule"/>
</dbReference>
<dbReference type="GO" id="GO:0032259">
    <property type="term" value="P:methylation"/>
    <property type="evidence" value="ECO:0007669"/>
    <property type="project" value="UniProtKB-KW"/>
</dbReference>
<dbReference type="CDD" id="cd02440">
    <property type="entry name" value="AdoMet_MTases"/>
    <property type="match status" value="1"/>
</dbReference>
<dbReference type="FunFam" id="3.40.50.150:FF:000086">
    <property type="entry name" value="Demethylmenaquinone methyltransferase"/>
    <property type="match status" value="1"/>
</dbReference>
<dbReference type="Gene3D" id="3.40.50.150">
    <property type="entry name" value="Vaccinia Virus protein VP39"/>
    <property type="match status" value="1"/>
</dbReference>
<dbReference type="HAMAP" id="MF_01813">
    <property type="entry name" value="MenG_UbiE_methyltr"/>
    <property type="match status" value="1"/>
</dbReference>
<dbReference type="InterPro" id="IPR014122">
    <property type="entry name" value="MenG_heptapren"/>
</dbReference>
<dbReference type="InterPro" id="IPR029063">
    <property type="entry name" value="SAM-dependent_MTases_sf"/>
</dbReference>
<dbReference type="InterPro" id="IPR004033">
    <property type="entry name" value="UbiE/COQ5_MeTrFase"/>
</dbReference>
<dbReference type="InterPro" id="IPR023576">
    <property type="entry name" value="UbiE/COQ5_MeTrFase_CS"/>
</dbReference>
<dbReference type="NCBIfam" id="TIGR02752">
    <property type="entry name" value="MenG_heptapren"/>
    <property type="match status" value="1"/>
</dbReference>
<dbReference type="NCBIfam" id="TIGR01934">
    <property type="entry name" value="MenG_MenH_UbiE"/>
    <property type="match status" value="1"/>
</dbReference>
<dbReference type="NCBIfam" id="NF001243">
    <property type="entry name" value="PRK00216.1-4"/>
    <property type="match status" value="1"/>
</dbReference>
<dbReference type="NCBIfam" id="NF001244">
    <property type="entry name" value="PRK00216.1-5"/>
    <property type="match status" value="1"/>
</dbReference>
<dbReference type="PANTHER" id="PTHR43591:SF24">
    <property type="entry name" value="2-METHOXY-6-POLYPRENYL-1,4-BENZOQUINOL METHYLASE, MITOCHONDRIAL"/>
    <property type="match status" value="1"/>
</dbReference>
<dbReference type="PANTHER" id="PTHR43591">
    <property type="entry name" value="METHYLTRANSFERASE"/>
    <property type="match status" value="1"/>
</dbReference>
<dbReference type="Pfam" id="PF01209">
    <property type="entry name" value="Ubie_methyltran"/>
    <property type="match status" value="1"/>
</dbReference>
<dbReference type="SUPFAM" id="SSF53335">
    <property type="entry name" value="S-adenosyl-L-methionine-dependent methyltransferases"/>
    <property type="match status" value="1"/>
</dbReference>
<dbReference type="PROSITE" id="PS51608">
    <property type="entry name" value="SAM_MT_UBIE"/>
    <property type="match status" value="1"/>
</dbReference>
<dbReference type="PROSITE" id="PS01183">
    <property type="entry name" value="UBIE_1"/>
    <property type="match status" value="1"/>
</dbReference>
<dbReference type="PROSITE" id="PS01184">
    <property type="entry name" value="UBIE_2"/>
    <property type="match status" value="1"/>
</dbReference>
<accession>A7GN50</accession>
<evidence type="ECO:0000255" key="1">
    <source>
        <dbReference type="HAMAP-Rule" id="MF_01813"/>
    </source>
</evidence>
<organism>
    <name type="scientific">Bacillus cytotoxicus (strain DSM 22905 / CIP 110041 / 391-98 / NVH 391-98)</name>
    <dbReference type="NCBI Taxonomy" id="315749"/>
    <lineage>
        <taxon>Bacteria</taxon>
        <taxon>Bacillati</taxon>
        <taxon>Bacillota</taxon>
        <taxon>Bacilli</taxon>
        <taxon>Bacillales</taxon>
        <taxon>Bacillaceae</taxon>
        <taxon>Bacillus</taxon>
        <taxon>Bacillus cereus group</taxon>
    </lineage>
</organism>
<keyword id="KW-0474">Menaquinone biosynthesis</keyword>
<keyword id="KW-0489">Methyltransferase</keyword>
<keyword id="KW-0949">S-adenosyl-L-methionine</keyword>
<keyword id="KW-0808">Transferase</keyword>
<gene>
    <name evidence="1" type="primary">menG</name>
    <name type="ordered locus">Bcer98_1236</name>
</gene>
<name>MENG_BACCN</name>
<protein>
    <recommendedName>
        <fullName evidence="1">Demethylmenaquinone methyltransferase</fullName>
        <ecNumber evidence="1">2.1.1.163</ecNumber>
    </recommendedName>
</protein>